<organism>
    <name type="scientific">Staphylococcus aureus (strain JH9)</name>
    <dbReference type="NCBI Taxonomy" id="359786"/>
    <lineage>
        <taxon>Bacteria</taxon>
        <taxon>Bacillati</taxon>
        <taxon>Bacillota</taxon>
        <taxon>Bacilli</taxon>
        <taxon>Bacillales</taxon>
        <taxon>Staphylococcaceae</taxon>
        <taxon>Staphylococcus</taxon>
    </lineage>
</organism>
<accession>A5ITR5</accession>
<dbReference type="EMBL" id="CP000703">
    <property type="protein sequence ID" value="ABQ49588.1"/>
    <property type="molecule type" value="Genomic_DNA"/>
</dbReference>
<dbReference type="RefSeq" id="WP_001091387.1">
    <property type="nucleotide sequence ID" value="NC_009487.1"/>
</dbReference>
<dbReference type="KEGG" id="saj:SaurJH9_1798"/>
<dbReference type="HOGENOM" id="CLU_085634_0_0_9"/>
<dbReference type="HAMAP" id="MF_01548">
    <property type="entry name" value="UPF0354"/>
    <property type="match status" value="1"/>
</dbReference>
<dbReference type="InterPro" id="IPR010838">
    <property type="entry name" value="DUF1444"/>
</dbReference>
<dbReference type="NCBIfam" id="NF010189">
    <property type="entry name" value="PRK13668.1"/>
    <property type="match status" value="1"/>
</dbReference>
<dbReference type="Pfam" id="PF07285">
    <property type="entry name" value="DUF1444"/>
    <property type="match status" value="1"/>
</dbReference>
<dbReference type="PIRSF" id="PIRSF012562">
    <property type="entry name" value="UCP012562"/>
    <property type="match status" value="1"/>
</dbReference>
<proteinExistence type="inferred from homology"/>
<sequence length="285" mass="33070">MNTFQMRDKLKERLSHLDVDFKFNREEETLRIYRTDNNKGITIKLNAIVAKYEDKKEKIVDEIVYYVDEAIAQMADKTLESISSSQIMPVIRATSFDKKTKQGVPFIYDEHTAETAVYYAVDLGKSYRLIDESMLEDLKLTEQQIREMSLFNVRKLSNSYTTDEVKGNIFYFINSNDGYDASRILNTAFLNEIEAQCQGEMLVAVPHQDVLIIADIRNKTGYDVMAHLTMEFFTKGLVPITSLSFGYKQGHLEPIFILGKNNKQKRDPNVIQRLEANRRKFNKDK</sequence>
<feature type="chain" id="PRO_1000087727" description="UPF0354 protein SaurJH9_1798">
    <location>
        <begin position="1"/>
        <end position="285"/>
    </location>
</feature>
<protein>
    <recommendedName>
        <fullName evidence="1">UPF0354 protein SaurJH9_1798</fullName>
    </recommendedName>
</protein>
<comment type="similarity">
    <text evidence="1">Belongs to the UPF0354 family.</text>
</comment>
<reference key="1">
    <citation type="submission" date="2007-05" db="EMBL/GenBank/DDBJ databases">
        <title>Complete sequence of chromosome of Staphylococcus aureus subsp. aureus JH9.</title>
        <authorList>
            <consortium name="US DOE Joint Genome Institute"/>
            <person name="Copeland A."/>
            <person name="Lucas S."/>
            <person name="Lapidus A."/>
            <person name="Barry K."/>
            <person name="Detter J.C."/>
            <person name="Glavina del Rio T."/>
            <person name="Hammon N."/>
            <person name="Israni S."/>
            <person name="Pitluck S."/>
            <person name="Chain P."/>
            <person name="Malfatti S."/>
            <person name="Shin M."/>
            <person name="Vergez L."/>
            <person name="Schmutz J."/>
            <person name="Larimer F."/>
            <person name="Land M."/>
            <person name="Hauser L."/>
            <person name="Kyrpides N."/>
            <person name="Kim E."/>
            <person name="Tomasz A."/>
            <person name="Richardson P."/>
        </authorList>
    </citation>
    <scope>NUCLEOTIDE SEQUENCE [LARGE SCALE GENOMIC DNA]</scope>
    <source>
        <strain>JH9</strain>
    </source>
</reference>
<evidence type="ECO:0000255" key="1">
    <source>
        <dbReference type="HAMAP-Rule" id="MF_01548"/>
    </source>
</evidence>
<name>Y1798_STAA9</name>
<gene>
    <name type="ordered locus">SaurJH9_1798</name>
</gene>